<feature type="chain" id="PRO_0000277608" description="Inactive ADP-ribosyltransferase ARH2">
    <location>
        <begin position="1"/>
        <end position="354"/>
    </location>
</feature>
<feature type="modified residue" description="Phosphoserine" evidence="2">
    <location>
        <position position="27"/>
    </location>
</feature>
<name>ARHL1_PONAB</name>
<sequence>MEKFKAAMLLGSVGDALGYRNVCKENSTVGMKIQEELQRSGGLDHLVLSPGEWPVSDNTIMHIATAEALTTDYWCLDDLYREMVRCYVEIVEKLPERRPDPATIEGCAQLKPNNYLLAWHTPFNEKGSGFGAATKAMCIGLRYWKPERLETLIEVSVECGRMTHNHPTGFLGSLCTALFVSFAAQGKPLVQWGRDMLRAVPLAEEYCKKTIRHTAEYQEHWFYFEAKWQFYLEERKISKDSENKAIFPDNYDAEEREKTYRKWSSEGRGGRRGHDAPMIAYDALLAAGNSWTELCHRAMFHGGESAATGTIAGCLFGLLYGLDLVPKGLHQDLEDKEKLEDLGAALYCLSTEEK</sequence>
<organism>
    <name type="scientific">Pongo abelii</name>
    <name type="common">Sumatran orangutan</name>
    <name type="synonym">Pongo pygmaeus abelii</name>
    <dbReference type="NCBI Taxonomy" id="9601"/>
    <lineage>
        <taxon>Eukaryota</taxon>
        <taxon>Metazoa</taxon>
        <taxon>Chordata</taxon>
        <taxon>Craniata</taxon>
        <taxon>Vertebrata</taxon>
        <taxon>Euteleostomi</taxon>
        <taxon>Mammalia</taxon>
        <taxon>Eutheria</taxon>
        <taxon>Euarchontoglires</taxon>
        <taxon>Primates</taxon>
        <taxon>Haplorrhini</taxon>
        <taxon>Catarrhini</taxon>
        <taxon>Hominidae</taxon>
        <taxon>Pongo</taxon>
    </lineage>
</organism>
<dbReference type="EMBL" id="CR858280">
    <property type="protein sequence ID" value="CAH90517.1"/>
    <property type="molecule type" value="mRNA"/>
</dbReference>
<dbReference type="RefSeq" id="NP_001127298.1">
    <property type="nucleotide sequence ID" value="NM_001133826.1"/>
</dbReference>
<dbReference type="SMR" id="Q5RCJ0"/>
<dbReference type="FunCoup" id="Q5RCJ0">
    <property type="interactions" value="17"/>
</dbReference>
<dbReference type="STRING" id="9601.ENSPPYP00000006299"/>
<dbReference type="InParanoid" id="Q5RCJ0"/>
<dbReference type="Proteomes" id="UP000001595">
    <property type="component" value="Unplaced"/>
</dbReference>
<dbReference type="GO" id="GO:0030017">
    <property type="term" value="C:sarcomere"/>
    <property type="evidence" value="ECO:0000250"/>
    <property type="project" value="UniProtKB"/>
</dbReference>
<dbReference type="GO" id="GO:0003875">
    <property type="term" value="F:ADP-ribosylarginine hydrolase activity"/>
    <property type="evidence" value="ECO:0007669"/>
    <property type="project" value="InterPro"/>
</dbReference>
<dbReference type="GO" id="GO:0000287">
    <property type="term" value="F:magnesium ion binding"/>
    <property type="evidence" value="ECO:0007669"/>
    <property type="project" value="InterPro"/>
</dbReference>
<dbReference type="GO" id="GO:0003242">
    <property type="term" value="P:cardiac chamber ballooning"/>
    <property type="evidence" value="ECO:0000250"/>
    <property type="project" value="UniProtKB"/>
</dbReference>
<dbReference type="GO" id="GO:0055003">
    <property type="term" value="P:cardiac myofibril assembly"/>
    <property type="evidence" value="ECO:0000250"/>
    <property type="project" value="UniProtKB"/>
</dbReference>
<dbReference type="GO" id="GO:0051725">
    <property type="term" value="P:protein de-ADP-ribosylation"/>
    <property type="evidence" value="ECO:0007669"/>
    <property type="project" value="InterPro"/>
</dbReference>
<dbReference type="FunFam" id="1.10.4080.10:FF:000002">
    <property type="entry name" value="ADP-ribosylarginine hydrolase isoform X1"/>
    <property type="match status" value="1"/>
</dbReference>
<dbReference type="Gene3D" id="1.10.4080.10">
    <property type="entry name" value="ADP-ribosylation/Crystallin J1"/>
    <property type="match status" value="1"/>
</dbReference>
<dbReference type="InterPro" id="IPR012108">
    <property type="entry name" value="ADP-ribosylarg_hydro"/>
</dbReference>
<dbReference type="InterPro" id="IPR050792">
    <property type="entry name" value="ADP-ribosylglycohydrolase"/>
</dbReference>
<dbReference type="InterPro" id="IPR005502">
    <property type="entry name" value="Ribosyl_crysJ1"/>
</dbReference>
<dbReference type="InterPro" id="IPR036705">
    <property type="entry name" value="Ribosyl_crysJ1_sf"/>
</dbReference>
<dbReference type="PANTHER" id="PTHR16222">
    <property type="entry name" value="ADP-RIBOSYLGLYCOHYDROLASE"/>
    <property type="match status" value="1"/>
</dbReference>
<dbReference type="PANTHER" id="PTHR16222:SF23">
    <property type="entry name" value="INACTIVE ADP-RIBOSYLTRANSFERASE ARH2"/>
    <property type="match status" value="1"/>
</dbReference>
<dbReference type="Pfam" id="PF03747">
    <property type="entry name" value="ADP_ribosyl_GH"/>
    <property type="match status" value="1"/>
</dbReference>
<dbReference type="PIRSF" id="PIRSF016939">
    <property type="entry name" value="ADP_ribslarg_hdr"/>
    <property type="match status" value="1"/>
</dbReference>
<dbReference type="SUPFAM" id="SSF101478">
    <property type="entry name" value="ADP-ribosylglycohydrolase"/>
    <property type="match status" value="1"/>
</dbReference>
<gene>
    <name type="primary">ADPRHL1</name>
    <name type="synonym">ARH2</name>
</gene>
<reference key="1">
    <citation type="submission" date="2004-11" db="EMBL/GenBank/DDBJ databases">
        <authorList>
            <consortium name="The German cDNA consortium"/>
        </authorList>
    </citation>
    <scope>NUCLEOTIDE SEQUENCE [LARGE SCALE MRNA]</scope>
    <source>
        <tissue>Heart</tissue>
    </source>
</reference>
<proteinExistence type="evidence at transcript level"/>
<evidence type="ECO:0000250" key="1">
    <source>
        <dbReference type="UniProtKB" id="Q6AZR2"/>
    </source>
</evidence>
<evidence type="ECO:0000250" key="2">
    <source>
        <dbReference type="UniProtKB" id="Q8BGK2"/>
    </source>
</evidence>
<evidence type="ECO:0000305" key="3"/>
<comment type="function">
    <text evidence="1 2">Required for myofibril assembly and outgrowth of the cardiac chambers in the developing heart (By similarity). Appears to be catalytically inactive, showing no activity against O-acetyl-ADP-ribose (By similarity).</text>
</comment>
<comment type="subcellular location">
    <subcellularLocation>
        <location evidence="1">Cytoplasm</location>
        <location evidence="1">Myofibril</location>
        <location evidence="1">Sarcomere</location>
    </subcellularLocation>
</comment>
<comment type="similarity">
    <text evidence="3">Belongs to the ADP-ribosylglycohydrolase family.</text>
</comment>
<comment type="caution">
    <text evidence="1">Although it belongs to the ADP-ribosylglycohydrolase family, lacks the metal-binding and substrate-binding residues, suggesting that it has no hydrolase activity.</text>
</comment>
<keyword id="KW-0963">Cytoplasm</keyword>
<keyword id="KW-0597">Phosphoprotein</keyword>
<keyword id="KW-1185">Reference proteome</keyword>
<accession>Q5RCJ0</accession>
<protein>
    <recommendedName>
        <fullName evidence="3">Inactive ADP-ribosyltransferase ARH2</fullName>
    </recommendedName>
    <alternativeName>
        <fullName evidence="3">ADP-ribosylhydrolase-like protein 1</fullName>
    </alternativeName>
    <alternativeName>
        <fullName>[Protein ADP-ribosylarginine] hydrolase-like protein 1</fullName>
    </alternativeName>
</protein>